<reference evidence="5" key="1">
    <citation type="submission" date="2004-12" db="UniProtKB">
        <title>Purification and characterization of c-phycocyanin from Spirulina fusiformis.</title>
        <authorList>
            <person name="Harishkumar M."/>
            <person name="Radha K.S."/>
            <person name="Sugiki M."/>
            <person name="Omura S."/>
            <person name="Maruyama M."/>
        </authorList>
    </citation>
    <scope>PROTEIN SEQUENCE</scope>
    <scope>SUBCELLULAR LOCATION</scope>
</reference>
<reference evidence="5" key="2">
    <citation type="journal article" date="2006" name="Phytomedicine">
        <title>Purification of c-phycocyanin from Spirulina fusiformis and its effect on the induction of urokinase-type plasminogen activator from calf pulmonary endothelial cells.</title>
        <authorList>
            <person name="Madhyastha H.K."/>
            <person name="Radha K.S."/>
            <person name="Sugiki M."/>
            <person name="Omura S."/>
            <person name="Maruyama M."/>
        </authorList>
    </citation>
    <scope>PROTEIN SEQUENCE</scope>
    <scope>SUBUNIT</scope>
    <scope>INDUCTION OF A PLASMINOGEN ACTIVATOR IN MAMMALIAN CELL CULTURE</scope>
</reference>
<sequence length="44" mass="4720">MKTPLTEAVSIADSQGRFLSSTQIQVLFGRFRQAKAGLXAAKAL</sequence>
<feature type="chain" id="PRO_0000199118" description="C-phycocyanin alpha subunit">
    <location>
        <begin position="1"/>
        <end position="44" status="greater than"/>
    </location>
</feature>
<feature type="non-terminal residue">
    <location>
        <position position="44"/>
    </location>
</feature>
<gene>
    <name type="primary">cpcA</name>
</gene>
<dbReference type="GO" id="GO:0030089">
    <property type="term" value="C:phycobilisome"/>
    <property type="evidence" value="ECO:0007669"/>
    <property type="project" value="UniProtKB-KW"/>
</dbReference>
<dbReference type="GO" id="GO:0031676">
    <property type="term" value="C:plasma membrane-derived thylakoid membrane"/>
    <property type="evidence" value="ECO:0007669"/>
    <property type="project" value="UniProtKB-SubCell"/>
</dbReference>
<dbReference type="GO" id="GO:0015979">
    <property type="term" value="P:photosynthesis"/>
    <property type="evidence" value="ECO:0007669"/>
    <property type="project" value="UniProtKB-KW"/>
</dbReference>
<dbReference type="Gene3D" id="1.10.490.20">
    <property type="entry name" value="Phycocyanins"/>
    <property type="match status" value="1"/>
</dbReference>
<dbReference type="InterPro" id="IPR009050">
    <property type="entry name" value="Globin-like_sf"/>
</dbReference>
<dbReference type="InterPro" id="IPR012128">
    <property type="entry name" value="Phycobilisome_asu/bsu"/>
</dbReference>
<dbReference type="InterPro" id="IPR038719">
    <property type="entry name" value="Phycobilisome_asu/bsu_sf"/>
</dbReference>
<dbReference type="Pfam" id="PF00502">
    <property type="entry name" value="Phycobilisome"/>
    <property type="match status" value="1"/>
</dbReference>
<dbReference type="SUPFAM" id="SSF46458">
    <property type="entry name" value="Globin-like"/>
    <property type="match status" value="1"/>
</dbReference>
<accession>P84340</accession>
<comment type="function">
    <text>Light-harvesting photosynthetic bile pigment-protein from the phycobiliprotein complex (phycobilisome, PBS). Phycocyanin is the major phycobiliprotein in the PBS rod.</text>
</comment>
<comment type="subunit">
    <text evidence="1 3 5">Heterodimer of an alpha and a beta subunit (Probable) (PubMed:16920511). The heterodimer further assembles into trimers and the trimers into hexamers (By similarity).</text>
</comment>
<comment type="subcellular location">
    <subcellularLocation>
        <location evidence="4">Cellular thylakoid membrane</location>
        <topology evidence="4">Peripheral membrane protein</topology>
        <orientation evidence="4">Cytoplasmic side</orientation>
    </subcellularLocation>
    <text>Part of the phycobilisome rod.</text>
</comment>
<comment type="PTM">
    <text evidence="1 5">Contains one covalently linked bilin chromophore.</text>
</comment>
<comment type="miscellaneous">
    <text evidence="3">In cell culture induces a urokinase-type plasminogen activator; may therefore be useful in dissolving blood clots.</text>
</comment>
<comment type="similarity">
    <text evidence="2">Belongs to the phycobiliprotein family.</text>
</comment>
<protein>
    <recommendedName>
        <fullName>C-phycocyanin alpha subunit</fullName>
    </recommendedName>
</protein>
<proteinExistence type="evidence at protein level"/>
<evidence type="ECO:0000250" key="1">
    <source>
        <dbReference type="UniProtKB" id="P13530"/>
    </source>
</evidence>
<evidence type="ECO:0000255" key="2"/>
<evidence type="ECO:0000269" key="3">
    <source>
    </source>
</evidence>
<evidence type="ECO:0000269" key="4">
    <source ref="1"/>
</evidence>
<evidence type="ECO:0000305" key="5"/>
<organism>
    <name type="scientific">Limnospira fusiformis</name>
    <name type="common">Arthrospira fusiformis</name>
    <dbReference type="NCBI Taxonomy" id="54297"/>
    <lineage>
        <taxon>Bacteria</taxon>
        <taxon>Bacillati</taxon>
        <taxon>Cyanobacteriota</taxon>
        <taxon>Cyanophyceae</taxon>
        <taxon>Oscillatoriophycideae</taxon>
        <taxon>Oscillatoriales</taxon>
        <taxon>Sirenicapillariaceae</taxon>
        <taxon>Limnospira</taxon>
    </lineage>
</organism>
<keyword id="KW-0042">Antenna complex</keyword>
<keyword id="KW-0089">Bile pigment</keyword>
<keyword id="KW-0157">Chromophore</keyword>
<keyword id="KW-0903">Direct protein sequencing</keyword>
<keyword id="KW-0249">Electron transport</keyword>
<keyword id="KW-0472">Membrane</keyword>
<keyword id="KW-0602">Photosynthesis</keyword>
<keyword id="KW-0605">Phycobilisome</keyword>
<keyword id="KW-0793">Thylakoid</keyword>
<keyword id="KW-0813">Transport</keyword>
<name>PHCA_LIMFS</name>